<organism>
    <name type="scientific">Psychrobacter cryohalolentis (strain ATCC BAA-1226 / DSM 17306 / VKM B-2378 / K5)</name>
    <dbReference type="NCBI Taxonomy" id="335284"/>
    <lineage>
        <taxon>Bacteria</taxon>
        <taxon>Pseudomonadati</taxon>
        <taxon>Pseudomonadota</taxon>
        <taxon>Gammaproteobacteria</taxon>
        <taxon>Moraxellales</taxon>
        <taxon>Moraxellaceae</taxon>
        <taxon>Psychrobacter</taxon>
    </lineage>
</organism>
<dbReference type="EMBL" id="CP000323">
    <property type="protein sequence ID" value="ABE73856.1"/>
    <property type="molecule type" value="Genomic_DNA"/>
</dbReference>
<dbReference type="RefSeq" id="WP_011512447.1">
    <property type="nucleotide sequence ID" value="NC_007969.1"/>
</dbReference>
<dbReference type="SMR" id="Q1QEP7"/>
<dbReference type="STRING" id="335284.Pcryo_0072"/>
<dbReference type="KEGG" id="pcr:Pcryo_0072"/>
<dbReference type="eggNOG" id="COG0779">
    <property type="taxonomic scope" value="Bacteria"/>
</dbReference>
<dbReference type="HOGENOM" id="CLU_070525_1_1_6"/>
<dbReference type="Proteomes" id="UP000002425">
    <property type="component" value="Chromosome"/>
</dbReference>
<dbReference type="GO" id="GO:0005829">
    <property type="term" value="C:cytosol"/>
    <property type="evidence" value="ECO:0007669"/>
    <property type="project" value="TreeGrafter"/>
</dbReference>
<dbReference type="GO" id="GO:0000028">
    <property type="term" value="P:ribosomal small subunit assembly"/>
    <property type="evidence" value="ECO:0007669"/>
    <property type="project" value="TreeGrafter"/>
</dbReference>
<dbReference type="GO" id="GO:0006412">
    <property type="term" value="P:translation"/>
    <property type="evidence" value="ECO:0007669"/>
    <property type="project" value="TreeGrafter"/>
</dbReference>
<dbReference type="CDD" id="cd01734">
    <property type="entry name" value="YlxS_C"/>
    <property type="match status" value="1"/>
</dbReference>
<dbReference type="FunFam" id="3.30.300.70:FF:000001">
    <property type="entry name" value="Ribosome maturation factor RimP"/>
    <property type="match status" value="1"/>
</dbReference>
<dbReference type="Gene3D" id="2.30.30.180">
    <property type="entry name" value="Ribosome maturation factor RimP, C-terminal domain"/>
    <property type="match status" value="1"/>
</dbReference>
<dbReference type="Gene3D" id="3.30.300.70">
    <property type="entry name" value="RimP-like superfamily, N-terminal"/>
    <property type="match status" value="1"/>
</dbReference>
<dbReference type="HAMAP" id="MF_01077">
    <property type="entry name" value="RimP"/>
    <property type="match status" value="1"/>
</dbReference>
<dbReference type="InterPro" id="IPR003728">
    <property type="entry name" value="Ribosome_maturation_RimP"/>
</dbReference>
<dbReference type="InterPro" id="IPR028998">
    <property type="entry name" value="RimP_C"/>
</dbReference>
<dbReference type="InterPro" id="IPR036847">
    <property type="entry name" value="RimP_C_sf"/>
</dbReference>
<dbReference type="InterPro" id="IPR028989">
    <property type="entry name" value="RimP_N"/>
</dbReference>
<dbReference type="InterPro" id="IPR035956">
    <property type="entry name" value="RimP_N_sf"/>
</dbReference>
<dbReference type="NCBIfam" id="NF011224">
    <property type="entry name" value="PRK14631.1"/>
    <property type="match status" value="1"/>
</dbReference>
<dbReference type="PANTHER" id="PTHR33867">
    <property type="entry name" value="RIBOSOME MATURATION FACTOR RIMP"/>
    <property type="match status" value="1"/>
</dbReference>
<dbReference type="PANTHER" id="PTHR33867:SF1">
    <property type="entry name" value="RIBOSOME MATURATION FACTOR RIMP"/>
    <property type="match status" value="1"/>
</dbReference>
<dbReference type="Pfam" id="PF17384">
    <property type="entry name" value="DUF150_C"/>
    <property type="match status" value="1"/>
</dbReference>
<dbReference type="Pfam" id="PF02576">
    <property type="entry name" value="RimP_N"/>
    <property type="match status" value="1"/>
</dbReference>
<dbReference type="SUPFAM" id="SSF74942">
    <property type="entry name" value="YhbC-like, C-terminal domain"/>
    <property type="match status" value="1"/>
</dbReference>
<dbReference type="SUPFAM" id="SSF75420">
    <property type="entry name" value="YhbC-like, N-terminal domain"/>
    <property type="match status" value="1"/>
</dbReference>
<reference key="1">
    <citation type="submission" date="2006-03" db="EMBL/GenBank/DDBJ databases">
        <title>Complete sequence of chromosome of Psychrobacter cryohalolentis K5.</title>
        <authorList>
            <consortium name="US DOE Joint Genome Institute"/>
            <person name="Copeland A."/>
            <person name="Lucas S."/>
            <person name="Lapidus A."/>
            <person name="Barry K."/>
            <person name="Detter J.C."/>
            <person name="Glavina T."/>
            <person name="Hammon N."/>
            <person name="Israni S."/>
            <person name="Dalin E."/>
            <person name="Tice H."/>
            <person name="Pitluck S."/>
            <person name="Brettin T."/>
            <person name="Bruce D."/>
            <person name="Han C."/>
            <person name="Tapia R."/>
            <person name="Sims D.R."/>
            <person name="Gilna P."/>
            <person name="Schmutz J."/>
            <person name="Larimer F."/>
            <person name="Land M."/>
            <person name="Hauser L."/>
            <person name="Kyrpides N."/>
            <person name="Kim E."/>
            <person name="Richardson P."/>
        </authorList>
    </citation>
    <scope>NUCLEOTIDE SEQUENCE [LARGE SCALE GENOMIC DNA]</scope>
    <source>
        <strain>ATCC BAA-1226 / DSM 17306 / VKM B-2378 / K5</strain>
    </source>
</reference>
<name>RIMP_PSYCK</name>
<feature type="chain" id="PRO_0000384742" description="Ribosome maturation factor RimP">
    <location>
        <begin position="1"/>
        <end position="166"/>
    </location>
</feature>
<keyword id="KW-0963">Cytoplasm</keyword>
<keyword id="KW-0690">Ribosome biogenesis</keyword>
<proteinExistence type="inferred from homology"/>
<accession>Q1QEP7</accession>
<evidence type="ECO:0000255" key="1">
    <source>
        <dbReference type="HAMAP-Rule" id="MF_01077"/>
    </source>
</evidence>
<comment type="function">
    <text evidence="1">Required for maturation of 30S ribosomal subunits.</text>
</comment>
<comment type="subcellular location">
    <subcellularLocation>
        <location evidence="1">Cytoplasm</location>
    </subcellularLocation>
</comment>
<comment type="similarity">
    <text evidence="1">Belongs to the RimP family.</text>
</comment>
<gene>
    <name evidence="1" type="primary">rimP</name>
    <name type="ordered locus">Pcryo_0072</name>
</gene>
<protein>
    <recommendedName>
        <fullName evidence="1">Ribosome maturation factor RimP</fullName>
    </recommendedName>
</protein>
<sequence>MKLSTKVTELTNIIAPAVAACDVALWGIEFAPQGNRSLLRIYIEALPEEQAQNKQVTIENCAAVNHQVSGILEVHDPISGEFILEVSSPGFDRAFFSDEQMHAYVGQTVSLRLIQAIGEGDKKRRKATGTLNSIDATSLKLTATDGEQFEIALSNIDKANLIYEDA</sequence>